<feature type="chain" id="PRO_1000084493" description="Phosphoglycerol transferase I">
    <location>
        <begin position="1"/>
        <end position="763"/>
    </location>
</feature>
<feature type="transmembrane region" description="Helical" evidence="1">
    <location>
        <begin position="1"/>
        <end position="21"/>
    </location>
</feature>
<feature type="transmembrane region" description="Helical" evidence="1">
    <location>
        <begin position="26"/>
        <end position="46"/>
    </location>
</feature>
<feature type="transmembrane region" description="Helical" evidence="1">
    <location>
        <begin position="77"/>
        <end position="97"/>
    </location>
</feature>
<feature type="transmembrane region" description="Helical" evidence="1">
    <location>
        <begin position="108"/>
        <end position="128"/>
    </location>
</feature>
<comment type="function">
    <text evidence="1">Transfers a phosphoglycerol residue from phosphatidylglycerol to the membrane-bound nascent glucan backbones.</text>
</comment>
<comment type="catalytic activity">
    <reaction evidence="1">
        <text>a phosphatidylglycerol + a membrane-derived-oligosaccharide D-glucose = a 1,2-diacyl-sn-glycerol + a membrane-derived-oligosaccharide 6-(glycerophospho)-D-glucose.</text>
        <dbReference type="EC" id="2.7.8.20"/>
    </reaction>
</comment>
<comment type="pathway">
    <text evidence="1">Glycan metabolism; osmoregulated periplasmic glucan (OPG) biosynthesis.</text>
</comment>
<comment type="subcellular location">
    <subcellularLocation>
        <location evidence="1">Cell inner membrane</location>
        <topology evidence="1">Multi-pass membrane protein</topology>
    </subcellularLocation>
</comment>
<comment type="similarity">
    <text evidence="1">Belongs to the OpgB family.</text>
</comment>
<name>OPGB_ECOLC</name>
<evidence type="ECO:0000255" key="1">
    <source>
        <dbReference type="HAMAP-Rule" id="MF_01070"/>
    </source>
</evidence>
<proteinExistence type="inferred from homology"/>
<gene>
    <name evidence="1" type="primary">mdoB</name>
    <name evidence="1" type="synonym">opgB</name>
    <name type="ordered locus">EcolC_3696</name>
</gene>
<organism>
    <name type="scientific">Escherichia coli (strain ATCC 8739 / DSM 1576 / NBRC 3972 / NCIMB 8545 / WDCM 00012 / Crooks)</name>
    <dbReference type="NCBI Taxonomy" id="481805"/>
    <lineage>
        <taxon>Bacteria</taxon>
        <taxon>Pseudomonadati</taxon>
        <taxon>Pseudomonadota</taxon>
        <taxon>Gammaproteobacteria</taxon>
        <taxon>Enterobacterales</taxon>
        <taxon>Enterobacteriaceae</taxon>
        <taxon>Escherichia</taxon>
    </lineage>
</organism>
<sequence>MSELLSFALFLASVLIYAWKAGRNTWWFAATLTVLGLFVVLNITLFASDYFTGAGINDAVLYTLTNSLTGAGVSKYILPGIGIVLGLTAVFGALGWILRRRRHHPHHFGYSLLALLLALGSVDASPAFRQITELVKSQSRDGDPDFAAYYKEPSKTIPDPKLNLVYIYGESLERTYFDNEAFPDLTPELGALKNEGLDFSHTQQLPGTDYTIAGMVASQCGIPLFAPFEGNASASVSSFFPQNICLGDILKNSGYQNYFVQGANLRFAGKDVFLKSHGFDHLYGSEELKSVVADPHYRNDWGFYDDTVLDEAWKKFEELSRSGQRFSLFTLTVDTHHPDGFISRTCNRKKYDFDGKPNQSFSAVSCSQENIAAFINKIKASPWFKDTVIVVSSDHLAMNNTAWKYLNKQDRNNLFFVIRGDKPQQETLAVKRNTMDNGATVLDILGGDNYLGLGRSSLSGQSMSEIFLNIKEKTLAWKPDIIRLWKFPKEMKEFTIDQQKNMIAFSGSHFRLPLLLRVSDKRVEPLPESEYSAPLRFQLADFAPRDNFVWVDRCYKMAQLWAPELALSTDWCVSQGQLGGQQIVQHVDKTTWKSKTAFKDTVIDMARYKGNVDTLKIVDNDIRYKADSFIFNVAGAPEEVKQFSGISRPESWGRWSNAQLGDEVKIEYKHPLPKKFDLVITAKAYGNNASRPIPVRVGNEEQTLVLGNEVTTTTLHFDNPTDADTLVIVPPEPVSTNEGNILGHSPRKLGIGMVDIKVVEREG</sequence>
<keyword id="KW-0997">Cell inner membrane</keyword>
<keyword id="KW-1003">Cell membrane</keyword>
<keyword id="KW-0472">Membrane</keyword>
<keyword id="KW-0808">Transferase</keyword>
<keyword id="KW-0812">Transmembrane</keyword>
<keyword id="KW-1133">Transmembrane helix</keyword>
<dbReference type="EC" id="2.7.8.20" evidence="1"/>
<dbReference type="EMBL" id="CP000946">
    <property type="protein sequence ID" value="ACA79307.1"/>
    <property type="molecule type" value="Genomic_DNA"/>
</dbReference>
<dbReference type="RefSeq" id="WP_001292620.1">
    <property type="nucleotide sequence ID" value="NC_010468.1"/>
</dbReference>
<dbReference type="SMR" id="B1IS59"/>
<dbReference type="KEGG" id="ecl:EcolC_3696"/>
<dbReference type="HOGENOM" id="CLU_023986_1_0_6"/>
<dbReference type="UniPathway" id="UPA00637"/>
<dbReference type="GO" id="GO:0005886">
    <property type="term" value="C:plasma membrane"/>
    <property type="evidence" value="ECO:0007669"/>
    <property type="project" value="UniProtKB-SubCell"/>
</dbReference>
<dbReference type="GO" id="GO:0008960">
    <property type="term" value="F:phosphatidylglycerol-membrane-oligosaccharide glycerophosphotransferase activity"/>
    <property type="evidence" value="ECO:0007669"/>
    <property type="project" value="UniProtKB-UniRule"/>
</dbReference>
<dbReference type="GO" id="GO:0009250">
    <property type="term" value="P:glucan biosynthetic process"/>
    <property type="evidence" value="ECO:0007669"/>
    <property type="project" value="UniProtKB-UniRule"/>
</dbReference>
<dbReference type="CDD" id="cd16015">
    <property type="entry name" value="LTA_synthase"/>
    <property type="match status" value="1"/>
</dbReference>
<dbReference type="FunFam" id="3.40.720.10:FF:000009">
    <property type="entry name" value="Phosphoglycerol transferase I"/>
    <property type="match status" value="1"/>
</dbReference>
<dbReference type="Gene3D" id="3.40.720.10">
    <property type="entry name" value="Alkaline Phosphatase, subunit A"/>
    <property type="match status" value="1"/>
</dbReference>
<dbReference type="HAMAP" id="MF_01070">
    <property type="entry name" value="MdoB_OpgB"/>
    <property type="match status" value="1"/>
</dbReference>
<dbReference type="InterPro" id="IPR017850">
    <property type="entry name" value="Alkaline_phosphatase_core_sf"/>
</dbReference>
<dbReference type="InterPro" id="IPR054288">
    <property type="entry name" value="DUF7024"/>
</dbReference>
<dbReference type="InterPro" id="IPR020881">
    <property type="entry name" value="OpgB"/>
</dbReference>
<dbReference type="InterPro" id="IPR050448">
    <property type="entry name" value="OpgB/LTA_synthase_biosynth"/>
</dbReference>
<dbReference type="InterPro" id="IPR000917">
    <property type="entry name" value="Sulfatase_N"/>
</dbReference>
<dbReference type="NCBIfam" id="NF003000">
    <property type="entry name" value="PRK03776.1"/>
    <property type="match status" value="1"/>
</dbReference>
<dbReference type="PANTHER" id="PTHR47371">
    <property type="entry name" value="LIPOTEICHOIC ACID SYNTHASE"/>
    <property type="match status" value="1"/>
</dbReference>
<dbReference type="PANTHER" id="PTHR47371:SF3">
    <property type="entry name" value="PHOSPHOGLYCEROL TRANSFERASE I"/>
    <property type="match status" value="1"/>
</dbReference>
<dbReference type="Pfam" id="PF22895">
    <property type="entry name" value="DUF7024"/>
    <property type="match status" value="1"/>
</dbReference>
<dbReference type="Pfam" id="PF00884">
    <property type="entry name" value="Sulfatase"/>
    <property type="match status" value="1"/>
</dbReference>
<dbReference type="SUPFAM" id="SSF53649">
    <property type="entry name" value="Alkaline phosphatase-like"/>
    <property type="match status" value="1"/>
</dbReference>
<accession>B1IS59</accession>
<protein>
    <recommendedName>
        <fullName evidence="1">Phosphoglycerol transferase I</fullName>
        <ecNumber evidence="1">2.7.8.20</ecNumber>
    </recommendedName>
    <alternativeName>
        <fullName evidence="1">Phosphatidylglycerol--membrane-oligosaccharide glycerophosphotransferase</fullName>
    </alternativeName>
</protein>
<reference key="1">
    <citation type="submission" date="2008-02" db="EMBL/GenBank/DDBJ databases">
        <title>Complete sequence of Escherichia coli C str. ATCC 8739.</title>
        <authorList>
            <person name="Copeland A."/>
            <person name="Lucas S."/>
            <person name="Lapidus A."/>
            <person name="Glavina del Rio T."/>
            <person name="Dalin E."/>
            <person name="Tice H."/>
            <person name="Bruce D."/>
            <person name="Goodwin L."/>
            <person name="Pitluck S."/>
            <person name="Kiss H."/>
            <person name="Brettin T."/>
            <person name="Detter J.C."/>
            <person name="Han C."/>
            <person name="Kuske C.R."/>
            <person name="Schmutz J."/>
            <person name="Larimer F."/>
            <person name="Land M."/>
            <person name="Hauser L."/>
            <person name="Kyrpides N."/>
            <person name="Mikhailova N."/>
            <person name="Ingram L."/>
            <person name="Richardson P."/>
        </authorList>
    </citation>
    <scope>NUCLEOTIDE SEQUENCE [LARGE SCALE GENOMIC DNA]</scope>
    <source>
        <strain>ATCC 8739 / DSM 1576 / NBRC 3972 / NCIMB 8545 / WDCM 00012 / Crooks</strain>
    </source>
</reference>